<gene>
    <name evidence="6" type="primary">tlk2</name>
</gene>
<comment type="function">
    <text evidence="1">Serine/threonine-protein kinase involved in the process of chromatin assembly and probably also DNA replication, transcription, repair, and chromosome segregation (By similarity). Negative regulator of amino acid starvation-induced autophagy (By similarity).</text>
</comment>
<comment type="catalytic activity">
    <reaction evidence="1">
        <text>L-seryl-[protein] + ATP = O-phospho-L-seryl-[protein] + ADP + H(+)</text>
        <dbReference type="Rhea" id="RHEA:17989"/>
        <dbReference type="Rhea" id="RHEA-COMP:9863"/>
        <dbReference type="Rhea" id="RHEA-COMP:11604"/>
        <dbReference type="ChEBI" id="CHEBI:15378"/>
        <dbReference type="ChEBI" id="CHEBI:29999"/>
        <dbReference type="ChEBI" id="CHEBI:30616"/>
        <dbReference type="ChEBI" id="CHEBI:83421"/>
        <dbReference type="ChEBI" id="CHEBI:456216"/>
        <dbReference type="EC" id="2.7.11.1"/>
    </reaction>
</comment>
<comment type="catalytic activity">
    <reaction evidence="1">
        <text>L-threonyl-[protein] + ATP = O-phospho-L-threonyl-[protein] + ADP + H(+)</text>
        <dbReference type="Rhea" id="RHEA:46608"/>
        <dbReference type="Rhea" id="RHEA-COMP:11060"/>
        <dbReference type="Rhea" id="RHEA-COMP:11605"/>
        <dbReference type="ChEBI" id="CHEBI:15378"/>
        <dbReference type="ChEBI" id="CHEBI:30013"/>
        <dbReference type="ChEBI" id="CHEBI:30616"/>
        <dbReference type="ChEBI" id="CHEBI:61977"/>
        <dbReference type="ChEBI" id="CHEBI:456216"/>
        <dbReference type="EC" id="2.7.11.1"/>
    </reaction>
</comment>
<comment type="cofactor">
    <cofactor evidence="1">
        <name>Mg(2+)</name>
        <dbReference type="ChEBI" id="CHEBI:18420"/>
    </cofactor>
</comment>
<comment type="subunit">
    <text evidence="1">Monomer (By similarity). May form homodimers; homodimerization may enhance autophosphoylation and enzymatic activity (By similarity). Heterodimer with TLK1 (By similarity).</text>
</comment>
<comment type="subcellular location">
    <subcellularLocation>
        <location evidence="1">Nucleus</location>
    </subcellularLocation>
    <subcellularLocation>
        <location evidence="1">Nucleus</location>
        <location evidence="1">Nucleoplasm</location>
    </subcellularLocation>
    <subcellularLocation>
        <location evidence="1">Cytoplasm</location>
        <location evidence="1">Perinuclear region</location>
    </subcellularLocation>
    <subcellularLocation>
        <location evidence="1">Cytoplasm</location>
        <location evidence="1">Cytoskeleton</location>
    </subcellularLocation>
    <text evidence="1">Colocalizes with the cytoplasmic intermediate filament system during the G1 phase of the cell cycle (By similarity). Present in the perinuclear region at S phase and in the nucleus at late G2 (By similarity).</text>
</comment>
<comment type="PTM">
    <text evidence="1">Phosphorylated (By similarity). Autophosphorylated; phosphorylation promotes the assembly of higher order oligomers and enzymatic activity (By similarity).</text>
</comment>
<comment type="similarity">
    <text evidence="3">Belongs to the protein kinase superfamily. Ser/Thr protein kinase family.</text>
</comment>
<dbReference type="EC" id="2.7.11.1" evidence="1"/>
<dbReference type="EMBL" id="BC124064">
    <property type="protein sequence ID" value="AAI24065.1"/>
    <property type="molecule type" value="mRNA"/>
</dbReference>
<dbReference type="RefSeq" id="NP_001072711.1">
    <property type="nucleotide sequence ID" value="NM_001079243.1"/>
</dbReference>
<dbReference type="RefSeq" id="XP_031750034.1">
    <property type="nucleotide sequence ID" value="XM_031894174.1"/>
</dbReference>
<dbReference type="SMR" id="Q08CW1"/>
<dbReference type="FunCoup" id="Q08CW1">
    <property type="interactions" value="4015"/>
</dbReference>
<dbReference type="STRING" id="8364.ENSXETP00000048197"/>
<dbReference type="PaxDb" id="8364-ENSXETP00000017169"/>
<dbReference type="DNASU" id="780168"/>
<dbReference type="GeneID" id="780168"/>
<dbReference type="KEGG" id="xtr:780168"/>
<dbReference type="AGR" id="Xenbase:XB-GENE-5747259"/>
<dbReference type="CTD" id="11011"/>
<dbReference type="Xenbase" id="XB-GENE-5747259">
    <property type="gene designation" value="tlk2"/>
</dbReference>
<dbReference type="eggNOG" id="KOG1151">
    <property type="taxonomic scope" value="Eukaryota"/>
</dbReference>
<dbReference type="HOGENOM" id="CLU_000288_85_1_1"/>
<dbReference type="InParanoid" id="Q08CW1"/>
<dbReference type="OMA" id="LPSMTWQ"/>
<dbReference type="OrthoDB" id="346907at2759"/>
<dbReference type="PhylomeDB" id="Q08CW1"/>
<dbReference type="Proteomes" id="UP000008143">
    <property type="component" value="Chromosome 10"/>
</dbReference>
<dbReference type="GO" id="GO:0005856">
    <property type="term" value="C:cytoskeleton"/>
    <property type="evidence" value="ECO:0007669"/>
    <property type="project" value="UniProtKB-SubCell"/>
</dbReference>
<dbReference type="GO" id="GO:0005654">
    <property type="term" value="C:nucleoplasm"/>
    <property type="evidence" value="ECO:0007669"/>
    <property type="project" value="UniProtKB-SubCell"/>
</dbReference>
<dbReference type="GO" id="GO:0048471">
    <property type="term" value="C:perinuclear region of cytoplasm"/>
    <property type="evidence" value="ECO:0007669"/>
    <property type="project" value="UniProtKB-SubCell"/>
</dbReference>
<dbReference type="GO" id="GO:0005524">
    <property type="term" value="F:ATP binding"/>
    <property type="evidence" value="ECO:0007669"/>
    <property type="project" value="UniProtKB-KW"/>
</dbReference>
<dbReference type="GO" id="GO:0106310">
    <property type="term" value="F:protein serine kinase activity"/>
    <property type="evidence" value="ECO:0007669"/>
    <property type="project" value="RHEA"/>
</dbReference>
<dbReference type="GO" id="GO:0004674">
    <property type="term" value="F:protein serine/threonine kinase activity"/>
    <property type="evidence" value="ECO:0007669"/>
    <property type="project" value="UniProtKB-KW"/>
</dbReference>
<dbReference type="CDD" id="cd14041">
    <property type="entry name" value="STKc_TLK2"/>
    <property type="match status" value="1"/>
</dbReference>
<dbReference type="FunFam" id="1.10.510.10:FF:000037">
    <property type="entry name" value="Serine/threonine-protein kinase tousled-like 2"/>
    <property type="match status" value="1"/>
</dbReference>
<dbReference type="Gene3D" id="1.10.510.10">
    <property type="entry name" value="Transferase(Phosphotransferase) domain 1"/>
    <property type="match status" value="1"/>
</dbReference>
<dbReference type="InterPro" id="IPR011009">
    <property type="entry name" value="Kinase-like_dom_sf"/>
</dbReference>
<dbReference type="InterPro" id="IPR000719">
    <property type="entry name" value="Prot_kinase_dom"/>
</dbReference>
<dbReference type="InterPro" id="IPR017441">
    <property type="entry name" value="Protein_kinase_ATP_BS"/>
</dbReference>
<dbReference type="InterPro" id="IPR008271">
    <property type="entry name" value="Ser/Thr_kinase_AS"/>
</dbReference>
<dbReference type="PANTHER" id="PTHR22974">
    <property type="entry name" value="MIXED LINEAGE PROTEIN KINASE"/>
    <property type="match status" value="1"/>
</dbReference>
<dbReference type="PANTHER" id="PTHR22974:SF20">
    <property type="entry name" value="SERINE_THREONINE-PROTEIN KINASE TOUSLED-LIKE 2"/>
    <property type="match status" value="1"/>
</dbReference>
<dbReference type="Pfam" id="PF00069">
    <property type="entry name" value="Pkinase"/>
    <property type="match status" value="1"/>
</dbReference>
<dbReference type="SMART" id="SM00220">
    <property type="entry name" value="S_TKc"/>
    <property type="match status" value="1"/>
</dbReference>
<dbReference type="SUPFAM" id="SSF56112">
    <property type="entry name" value="Protein kinase-like (PK-like)"/>
    <property type="match status" value="1"/>
</dbReference>
<dbReference type="PROSITE" id="PS00107">
    <property type="entry name" value="PROTEIN_KINASE_ATP"/>
    <property type="match status" value="1"/>
</dbReference>
<dbReference type="PROSITE" id="PS50011">
    <property type="entry name" value="PROTEIN_KINASE_DOM"/>
    <property type="match status" value="1"/>
</dbReference>
<dbReference type="PROSITE" id="PS00108">
    <property type="entry name" value="PROTEIN_KINASE_ST"/>
    <property type="match status" value="1"/>
</dbReference>
<feature type="chain" id="PRO_0000367034" description="Serine/threonine-protein kinase tousled-like 2">
    <location>
        <begin position="1"/>
        <end position="697"/>
    </location>
</feature>
<feature type="domain" description="Protein kinase" evidence="3">
    <location>
        <begin position="387"/>
        <end position="666"/>
    </location>
</feature>
<feature type="region of interest" description="Disordered" evidence="5">
    <location>
        <begin position="27"/>
        <end position="136"/>
    </location>
</feature>
<feature type="region of interest" description="Disordered" evidence="5">
    <location>
        <begin position="289"/>
        <end position="315"/>
    </location>
</feature>
<feature type="coiled-coil region" evidence="2">
    <location>
        <begin position="264"/>
        <end position="293"/>
    </location>
</feature>
<feature type="coiled-coil region" evidence="2">
    <location>
        <begin position="334"/>
        <end position="372"/>
    </location>
</feature>
<feature type="compositionally biased region" description="Polar residues" evidence="5">
    <location>
        <begin position="31"/>
        <end position="44"/>
    </location>
</feature>
<feature type="compositionally biased region" description="Basic and acidic residues" evidence="5">
    <location>
        <begin position="46"/>
        <end position="62"/>
    </location>
</feature>
<feature type="compositionally biased region" description="Low complexity" evidence="5">
    <location>
        <begin position="111"/>
        <end position="131"/>
    </location>
</feature>
<feature type="active site" description="Proton acceptor" evidence="3 4">
    <location>
        <position position="517"/>
    </location>
</feature>
<feature type="binding site" evidence="3">
    <location>
        <begin position="393"/>
        <end position="401"/>
    </location>
    <ligand>
        <name>ATP</name>
        <dbReference type="ChEBI" id="CHEBI:30616"/>
    </ligand>
</feature>
<feature type="binding site" evidence="3">
    <location>
        <position position="416"/>
    </location>
    <ligand>
        <name>ATP</name>
        <dbReference type="ChEBI" id="CHEBI:30616"/>
    </ligand>
</feature>
<sequence>MMEELHSLDPRRQELLEARFTGVGVAKAPLNSESSNQSLCSLGSLSDKELEQTPEKKQNDQRNRKRKADPYETSQGKNTPRGHKISDYFEFACGSGPGTSPGRSVPPVARSSPQHSLSNPLPLPSQQCSPPSTAPVNPEHSCASFKHISVQHRCTQSDLTMDKISALENSKSSDLEKKEGRIDDLLRVNCDLRRQMDEQKKMLEKYKERLNRCVTMSKKLLIEKSKQEKMACRDKSMQDRLRLGHFTTVRHGASFTEQWTDGYAFQNLIKQQERINTQREEIERQRKMLAKRKPPAMGQTPPANNEQKQRKNKTNGAENEALTLAEYHEQEEIFKLRLGHLKKEEAEIQAELERLERVRNLHIRELKRIHNEDNSQFKDHPTLNDRYLLLHLLGRGGFSEVYKAFDLTEQRYVAVKIHQLNKNWRDEKKENYHKHACREYRIHKELDHPRIVKLYDYFSLDTDSFCTVLEYCEGNDLDFYLKQHKLMTEKEARSIIMQIVNALKYLNEIKPPIIHYDLKPGNILLVNGTACGEIKITDFGLSKIMDDDSYNSVDGMELTSQGAGTYWYLPPECFVVGKEPPKISNKVDVWSVGVIFYQCLYGRKPFGHNQSQQDILQENTILKATEVQFPPKPVVTPEAKAFIRRCLAYRKEDRIDVQQLACDPYLLPHIRKSVSTSIPANAAVASTSGSSNNSLSN</sequence>
<accession>Q08CW1</accession>
<organism>
    <name type="scientific">Xenopus tropicalis</name>
    <name type="common">Western clawed frog</name>
    <name type="synonym">Silurana tropicalis</name>
    <dbReference type="NCBI Taxonomy" id="8364"/>
    <lineage>
        <taxon>Eukaryota</taxon>
        <taxon>Metazoa</taxon>
        <taxon>Chordata</taxon>
        <taxon>Craniata</taxon>
        <taxon>Vertebrata</taxon>
        <taxon>Euteleostomi</taxon>
        <taxon>Amphibia</taxon>
        <taxon>Batrachia</taxon>
        <taxon>Anura</taxon>
        <taxon>Pipoidea</taxon>
        <taxon>Pipidae</taxon>
        <taxon>Xenopodinae</taxon>
        <taxon>Xenopus</taxon>
        <taxon>Silurana</taxon>
    </lineage>
</organism>
<evidence type="ECO:0000250" key="1">
    <source>
        <dbReference type="UniProtKB" id="Q86UE8"/>
    </source>
</evidence>
<evidence type="ECO:0000255" key="2"/>
<evidence type="ECO:0000255" key="3">
    <source>
        <dbReference type="PROSITE-ProRule" id="PRU00159"/>
    </source>
</evidence>
<evidence type="ECO:0000255" key="4">
    <source>
        <dbReference type="PROSITE-ProRule" id="PRU10027"/>
    </source>
</evidence>
<evidence type="ECO:0000256" key="5">
    <source>
        <dbReference type="SAM" id="MobiDB-lite"/>
    </source>
</evidence>
<evidence type="ECO:0000312" key="6">
    <source>
        <dbReference type="EMBL" id="AAI24065.1"/>
    </source>
</evidence>
<keyword id="KW-0067">ATP-binding</keyword>
<keyword id="KW-0175">Coiled coil</keyword>
<keyword id="KW-0963">Cytoplasm</keyword>
<keyword id="KW-0206">Cytoskeleton</keyword>
<keyword id="KW-0418">Kinase</keyword>
<keyword id="KW-0547">Nucleotide-binding</keyword>
<keyword id="KW-0539">Nucleus</keyword>
<keyword id="KW-1185">Reference proteome</keyword>
<keyword id="KW-0723">Serine/threonine-protein kinase</keyword>
<keyword id="KW-0808">Transferase</keyword>
<protein>
    <recommendedName>
        <fullName evidence="1">Serine/threonine-protein kinase tousled-like 2</fullName>
        <ecNumber evidence="1">2.7.11.1</ecNumber>
    </recommendedName>
    <alternativeName>
        <fullName evidence="6">Tousled-like kinase 2</fullName>
    </alternativeName>
</protein>
<reference evidence="6" key="1">
    <citation type="submission" date="2006-09" db="EMBL/GenBank/DDBJ databases">
        <authorList>
            <consortium name="NIH - Xenopus Gene Collection (XGC) project"/>
        </authorList>
    </citation>
    <scope>NUCLEOTIDE SEQUENCE [LARGE SCALE MRNA]</scope>
    <source>
        <strain evidence="6">N6</strain>
        <tissue evidence="6">Skin</tissue>
    </source>
</reference>
<proteinExistence type="evidence at transcript level"/>
<name>TLK2_XENTR</name>